<comment type="function">
    <text evidence="1">Catalyzes the conversion of 4-hydroxy-tetrahydrodipicolinate (HTPA) to tetrahydrodipicolinate.</text>
</comment>
<comment type="catalytic activity">
    <reaction evidence="1">
        <text>(S)-2,3,4,5-tetrahydrodipicolinate + NAD(+) + H2O = (2S,4S)-4-hydroxy-2,3,4,5-tetrahydrodipicolinate + NADH + H(+)</text>
        <dbReference type="Rhea" id="RHEA:35323"/>
        <dbReference type="ChEBI" id="CHEBI:15377"/>
        <dbReference type="ChEBI" id="CHEBI:15378"/>
        <dbReference type="ChEBI" id="CHEBI:16845"/>
        <dbReference type="ChEBI" id="CHEBI:57540"/>
        <dbReference type="ChEBI" id="CHEBI:57945"/>
        <dbReference type="ChEBI" id="CHEBI:67139"/>
        <dbReference type="EC" id="1.17.1.8"/>
    </reaction>
</comment>
<comment type="catalytic activity">
    <reaction evidence="1">
        <text>(S)-2,3,4,5-tetrahydrodipicolinate + NADP(+) + H2O = (2S,4S)-4-hydroxy-2,3,4,5-tetrahydrodipicolinate + NADPH + H(+)</text>
        <dbReference type="Rhea" id="RHEA:35331"/>
        <dbReference type="ChEBI" id="CHEBI:15377"/>
        <dbReference type="ChEBI" id="CHEBI:15378"/>
        <dbReference type="ChEBI" id="CHEBI:16845"/>
        <dbReference type="ChEBI" id="CHEBI:57783"/>
        <dbReference type="ChEBI" id="CHEBI:58349"/>
        <dbReference type="ChEBI" id="CHEBI:67139"/>
        <dbReference type="EC" id="1.17.1.8"/>
    </reaction>
</comment>
<comment type="pathway">
    <text evidence="1">Amino-acid biosynthesis; L-lysine biosynthesis via DAP pathway; (S)-tetrahydrodipicolinate from L-aspartate: step 4/4.</text>
</comment>
<comment type="subcellular location">
    <subcellularLocation>
        <location evidence="1">Cytoplasm</location>
    </subcellularLocation>
</comment>
<comment type="similarity">
    <text evidence="1">Belongs to the DapB family.</text>
</comment>
<comment type="caution">
    <text evidence="2">Was originally thought to be a dihydrodipicolinate reductase (DHDPR), catalyzing the conversion of dihydrodipicolinate to tetrahydrodipicolinate. However, it was shown in E.coli that the substrate of the enzymatic reaction is not dihydrodipicolinate (DHDP) but in fact (2S,4S)-4-hydroxy-2,3,4,5-tetrahydrodipicolinic acid (HTPA), the product released by the DapA-catalyzed reaction.</text>
</comment>
<accession>C1CSH7</accession>
<dbReference type="EC" id="1.17.1.8" evidence="1"/>
<dbReference type="EMBL" id="CP000921">
    <property type="protein sequence ID" value="ACO24090.1"/>
    <property type="molecule type" value="Genomic_DNA"/>
</dbReference>
<dbReference type="RefSeq" id="WP_000027902.1">
    <property type="nucleotide sequence ID" value="NC_012469.1"/>
</dbReference>
<dbReference type="SMR" id="C1CSH7"/>
<dbReference type="KEGG" id="snt:SPT_1497"/>
<dbReference type="HOGENOM" id="CLU_047479_0_1_9"/>
<dbReference type="UniPathway" id="UPA00034">
    <property type="reaction ID" value="UER00018"/>
</dbReference>
<dbReference type="GO" id="GO:0005829">
    <property type="term" value="C:cytosol"/>
    <property type="evidence" value="ECO:0007669"/>
    <property type="project" value="TreeGrafter"/>
</dbReference>
<dbReference type="GO" id="GO:0008839">
    <property type="term" value="F:4-hydroxy-tetrahydrodipicolinate reductase"/>
    <property type="evidence" value="ECO:0007669"/>
    <property type="project" value="UniProtKB-EC"/>
</dbReference>
<dbReference type="GO" id="GO:0051287">
    <property type="term" value="F:NAD binding"/>
    <property type="evidence" value="ECO:0007669"/>
    <property type="project" value="UniProtKB-UniRule"/>
</dbReference>
<dbReference type="GO" id="GO:0050661">
    <property type="term" value="F:NADP binding"/>
    <property type="evidence" value="ECO:0007669"/>
    <property type="project" value="UniProtKB-UniRule"/>
</dbReference>
<dbReference type="GO" id="GO:0016726">
    <property type="term" value="F:oxidoreductase activity, acting on CH or CH2 groups, NAD or NADP as acceptor"/>
    <property type="evidence" value="ECO:0007669"/>
    <property type="project" value="UniProtKB-UniRule"/>
</dbReference>
<dbReference type="GO" id="GO:0019877">
    <property type="term" value="P:diaminopimelate biosynthetic process"/>
    <property type="evidence" value="ECO:0007669"/>
    <property type="project" value="UniProtKB-UniRule"/>
</dbReference>
<dbReference type="GO" id="GO:0009089">
    <property type="term" value="P:lysine biosynthetic process via diaminopimelate"/>
    <property type="evidence" value="ECO:0007669"/>
    <property type="project" value="UniProtKB-UniRule"/>
</dbReference>
<dbReference type="CDD" id="cd02274">
    <property type="entry name" value="DHDPR_N"/>
    <property type="match status" value="1"/>
</dbReference>
<dbReference type="FunFam" id="3.30.360.10:FF:000009">
    <property type="entry name" value="4-hydroxy-tetrahydrodipicolinate reductase"/>
    <property type="match status" value="1"/>
</dbReference>
<dbReference type="Gene3D" id="3.30.360.10">
    <property type="entry name" value="Dihydrodipicolinate Reductase, domain 2"/>
    <property type="match status" value="1"/>
</dbReference>
<dbReference type="Gene3D" id="3.40.50.720">
    <property type="entry name" value="NAD(P)-binding Rossmann-like Domain"/>
    <property type="match status" value="1"/>
</dbReference>
<dbReference type="HAMAP" id="MF_00102">
    <property type="entry name" value="DapB"/>
    <property type="match status" value="1"/>
</dbReference>
<dbReference type="InterPro" id="IPR022663">
    <property type="entry name" value="DapB_C"/>
</dbReference>
<dbReference type="InterPro" id="IPR000846">
    <property type="entry name" value="DapB_N"/>
</dbReference>
<dbReference type="InterPro" id="IPR022664">
    <property type="entry name" value="DapB_N_CS"/>
</dbReference>
<dbReference type="InterPro" id="IPR023940">
    <property type="entry name" value="DHDPR_bac"/>
</dbReference>
<dbReference type="InterPro" id="IPR036291">
    <property type="entry name" value="NAD(P)-bd_dom_sf"/>
</dbReference>
<dbReference type="NCBIfam" id="TIGR00036">
    <property type="entry name" value="dapB"/>
    <property type="match status" value="1"/>
</dbReference>
<dbReference type="PANTHER" id="PTHR20836:SF0">
    <property type="entry name" value="4-HYDROXY-TETRAHYDRODIPICOLINATE REDUCTASE 1, CHLOROPLASTIC-RELATED"/>
    <property type="match status" value="1"/>
</dbReference>
<dbReference type="PANTHER" id="PTHR20836">
    <property type="entry name" value="DIHYDRODIPICOLINATE REDUCTASE"/>
    <property type="match status" value="1"/>
</dbReference>
<dbReference type="Pfam" id="PF05173">
    <property type="entry name" value="DapB_C"/>
    <property type="match status" value="1"/>
</dbReference>
<dbReference type="Pfam" id="PF01113">
    <property type="entry name" value="DapB_N"/>
    <property type="match status" value="1"/>
</dbReference>
<dbReference type="PIRSF" id="PIRSF000161">
    <property type="entry name" value="DHPR"/>
    <property type="match status" value="1"/>
</dbReference>
<dbReference type="SUPFAM" id="SSF55347">
    <property type="entry name" value="Glyceraldehyde-3-phosphate dehydrogenase-like, C-terminal domain"/>
    <property type="match status" value="1"/>
</dbReference>
<dbReference type="SUPFAM" id="SSF51735">
    <property type="entry name" value="NAD(P)-binding Rossmann-fold domains"/>
    <property type="match status" value="1"/>
</dbReference>
<dbReference type="PROSITE" id="PS01298">
    <property type="entry name" value="DAPB"/>
    <property type="match status" value="1"/>
</dbReference>
<keyword id="KW-0028">Amino-acid biosynthesis</keyword>
<keyword id="KW-0963">Cytoplasm</keyword>
<keyword id="KW-0220">Diaminopimelate biosynthesis</keyword>
<keyword id="KW-0457">Lysine biosynthesis</keyword>
<keyword id="KW-0520">NAD</keyword>
<keyword id="KW-0521">NADP</keyword>
<keyword id="KW-0560">Oxidoreductase</keyword>
<organism>
    <name type="scientific">Streptococcus pneumoniae (strain Taiwan19F-14)</name>
    <dbReference type="NCBI Taxonomy" id="487213"/>
    <lineage>
        <taxon>Bacteria</taxon>
        <taxon>Bacillati</taxon>
        <taxon>Bacillota</taxon>
        <taxon>Bacilli</taxon>
        <taxon>Lactobacillales</taxon>
        <taxon>Streptococcaceae</taxon>
        <taxon>Streptococcus</taxon>
    </lineage>
</organism>
<feature type="chain" id="PRO_1000189760" description="4-hydroxy-tetrahydrodipicolinate reductase">
    <location>
        <begin position="1"/>
        <end position="255"/>
    </location>
</feature>
<feature type="active site" description="Proton donor/acceptor" evidence="1">
    <location>
        <position position="145"/>
    </location>
</feature>
<feature type="active site" description="Proton donor" evidence="1">
    <location>
        <position position="149"/>
    </location>
</feature>
<feature type="binding site" evidence="1">
    <location>
        <begin position="9"/>
        <end position="14"/>
    </location>
    <ligand>
        <name>NAD(+)</name>
        <dbReference type="ChEBI" id="CHEBI:57540"/>
    </ligand>
</feature>
<feature type="binding site" evidence="1">
    <location>
        <position position="35"/>
    </location>
    <ligand>
        <name>NAD(+)</name>
        <dbReference type="ChEBI" id="CHEBI:57540"/>
    </ligand>
</feature>
<feature type="binding site" evidence="1">
    <location>
        <begin position="89"/>
        <end position="91"/>
    </location>
    <ligand>
        <name>NAD(+)</name>
        <dbReference type="ChEBI" id="CHEBI:57540"/>
    </ligand>
</feature>
<feature type="binding site" evidence="1">
    <location>
        <begin position="115"/>
        <end position="118"/>
    </location>
    <ligand>
        <name>NAD(+)</name>
        <dbReference type="ChEBI" id="CHEBI:57540"/>
    </ligand>
</feature>
<feature type="binding site" evidence="1">
    <location>
        <position position="146"/>
    </location>
    <ligand>
        <name>(S)-2,3,4,5-tetrahydrodipicolinate</name>
        <dbReference type="ChEBI" id="CHEBI:16845"/>
    </ligand>
</feature>
<feature type="binding site" evidence="1">
    <location>
        <begin position="155"/>
        <end position="156"/>
    </location>
    <ligand>
        <name>(S)-2,3,4,5-tetrahydrodipicolinate</name>
        <dbReference type="ChEBI" id="CHEBI:16845"/>
    </ligand>
</feature>
<reference key="1">
    <citation type="journal article" date="2010" name="Genome Biol.">
        <title>Structure and dynamics of the pan-genome of Streptococcus pneumoniae and closely related species.</title>
        <authorList>
            <person name="Donati C."/>
            <person name="Hiller N.L."/>
            <person name="Tettelin H."/>
            <person name="Muzzi A."/>
            <person name="Croucher N.J."/>
            <person name="Angiuoli S.V."/>
            <person name="Oggioni M."/>
            <person name="Dunning Hotopp J.C."/>
            <person name="Hu F.Z."/>
            <person name="Riley D.R."/>
            <person name="Covacci A."/>
            <person name="Mitchell T.J."/>
            <person name="Bentley S.D."/>
            <person name="Kilian M."/>
            <person name="Ehrlich G.D."/>
            <person name="Rappuoli R."/>
            <person name="Moxon E.R."/>
            <person name="Masignani V."/>
        </authorList>
    </citation>
    <scope>NUCLEOTIDE SEQUENCE [LARGE SCALE GENOMIC DNA]</scope>
    <source>
        <strain>Taiwan19F-14</strain>
    </source>
</reference>
<evidence type="ECO:0000255" key="1">
    <source>
        <dbReference type="HAMAP-Rule" id="MF_00102"/>
    </source>
</evidence>
<evidence type="ECO:0000305" key="2"/>
<gene>
    <name evidence="1" type="primary">dapB</name>
    <name type="ordered locus">SPT_1497</name>
</gene>
<name>DAPB_STRZT</name>
<sequence>MSIRVIIAGFKGKMGQAACQMVLTDPDLDLVAVLDPFESESEWQGIPVFKDKADLAGFEADVWVDFTTPAVAYENTRFALENGFAPVVGTTGFTSEEIAELKEFSRAQDLGGLIAPNFALGAVLLMQFATQAAKYFPNVEIIELHHDKKKDAPSGTAIKTAELMAEVRESIQQGAADEEELIAGARGADFDGMRIHSVRLPGLVAHQEVIFGNQGEGLTLRHDSYDRISFMTGVNLGIKEVVKRHELVYGLEHLL</sequence>
<protein>
    <recommendedName>
        <fullName evidence="1">4-hydroxy-tetrahydrodipicolinate reductase</fullName>
        <shortName evidence="1">HTPA reductase</shortName>
        <ecNumber evidence="1">1.17.1.8</ecNumber>
    </recommendedName>
</protein>
<proteinExistence type="inferred from homology"/>